<name>SECB_SHESW</name>
<evidence type="ECO:0000255" key="1">
    <source>
        <dbReference type="HAMAP-Rule" id="MF_00821"/>
    </source>
</evidence>
<organism>
    <name type="scientific">Shewanella sp. (strain W3-18-1)</name>
    <dbReference type="NCBI Taxonomy" id="351745"/>
    <lineage>
        <taxon>Bacteria</taxon>
        <taxon>Pseudomonadati</taxon>
        <taxon>Pseudomonadota</taxon>
        <taxon>Gammaproteobacteria</taxon>
        <taxon>Alteromonadales</taxon>
        <taxon>Shewanellaceae</taxon>
        <taxon>Shewanella</taxon>
    </lineage>
</organism>
<dbReference type="EMBL" id="CP000503">
    <property type="protein sequence ID" value="ABM26838.1"/>
    <property type="molecule type" value="Genomic_DNA"/>
</dbReference>
<dbReference type="RefSeq" id="WP_011791259.1">
    <property type="nucleotide sequence ID" value="NC_008750.1"/>
</dbReference>
<dbReference type="SMR" id="A1RQ93"/>
<dbReference type="GeneID" id="67445440"/>
<dbReference type="KEGG" id="shw:Sputw3181_4036"/>
<dbReference type="HOGENOM" id="CLU_111574_1_0_6"/>
<dbReference type="Proteomes" id="UP000002597">
    <property type="component" value="Chromosome"/>
</dbReference>
<dbReference type="GO" id="GO:0005737">
    <property type="term" value="C:cytoplasm"/>
    <property type="evidence" value="ECO:0007669"/>
    <property type="project" value="UniProtKB-SubCell"/>
</dbReference>
<dbReference type="GO" id="GO:0051082">
    <property type="term" value="F:unfolded protein binding"/>
    <property type="evidence" value="ECO:0007669"/>
    <property type="project" value="InterPro"/>
</dbReference>
<dbReference type="GO" id="GO:0006457">
    <property type="term" value="P:protein folding"/>
    <property type="evidence" value="ECO:0007669"/>
    <property type="project" value="UniProtKB-UniRule"/>
</dbReference>
<dbReference type="GO" id="GO:0051262">
    <property type="term" value="P:protein tetramerization"/>
    <property type="evidence" value="ECO:0007669"/>
    <property type="project" value="InterPro"/>
</dbReference>
<dbReference type="GO" id="GO:0015031">
    <property type="term" value="P:protein transport"/>
    <property type="evidence" value="ECO:0007669"/>
    <property type="project" value="UniProtKB-UniRule"/>
</dbReference>
<dbReference type="Gene3D" id="3.10.420.10">
    <property type="entry name" value="SecB-like"/>
    <property type="match status" value="1"/>
</dbReference>
<dbReference type="HAMAP" id="MF_00821">
    <property type="entry name" value="SecB"/>
    <property type="match status" value="1"/>
</dbReference>
<dbReference type="InterPro" id="IPR003708">
    <property type="entry name" value="SecB"/>
</dbReference>
<dbReference type="InterPro" id="IPR035958">
    <property type="entry name" value="SecB-like_sf"/>
</dbReference>
<dbReference type="NCBIfam" id="NF004393">
    <property type="entry name" value="PRK05751.1-4"/>
    <property type="match status" value="1"/>
</dbReference>
<dbReference type="NCBIfam" id="TIGR00809">
    <property type="entry name" value="secB"/>
    <property type="match status" value="1"/>
</dbReference>
<dbReference type="PANTHER" id="PTHR36918">
    <property type="match status" value="1"/>
</dbReference>
<dbReference type="PANTHER" id="PTHR36918:SF1">
    <property type="entry name" value="PROTEIN-EXPORT PROTEIN SECB"/>
    <property type="match status" value="1"/>
</dbReference>
<dbReference type="Pfam" id="PF02556">
    <property type="entry name" value="SecB"/>
    <property type="match status" value="1"/>
</dbReference>
<dbReference type="PRINTS" id="PR01594">
    <property type="entry name" value="SECBCHAPRONE"/>
</dbReference>
<dbReference type="SUPFAM" id="SSF54611">
    <property type="entry name" value="SecB-like"/>
    <property type="match status" value="1"/>
</dbReference>
<comment type="function">
    <text evidence="1">One of the proteins required for the normal export of preproteins out of the cell cytoplasm. It is a molecular chaperone that binds to a subset of precursor proteins, maintaining them in a translocation-competent state. It also specifically binds to its receptor SecA.</text>
</comment>
<comment type="subunit">
    <text evidence="1">Homotetramer, a dimer of dimers. One homotetramer interacts with 1 SecA dimer.</text>
</comment>
<comment type="subcellular location">
    <subcellularLocation>
        <location evidence="1">Cytoplasm</location>
    </subcellularLocation>
</comment>
<comment type="similarity">
    <text evidence="1">Belongs to the SecB family.</text>
</comment>
<feature type="chain" id="PRO_1000062526" description="Protein-export protein SecB">
    <location>
        <begin position="1"/>
        <end position="161"/>
    </location>
</feature>
<reference key="1">
    <citation type="submission" date="2006-12" db="EMBL/GenBank/DDBJ databases">
        <title>Complete sequence of Shewanella sp. W3-18-1.</title>
        <authorList>
            <consortium name="US DOE Joint Genome Institute"/>
            <person name="Copeland A."/>
            <person name="Lucas S."/>
            <person name="Lapidus A."/>
            <person name="Barry K."/>
            <person name="Detter J.C."/>
            <person name="Glavina del Rio T."/>
            <person name="Hammon N."/>
            <person name="Israni S."/>
            <person name="Dalin E."/>
            <person name="Tice H."/>
            <person name="Pitluck S."/>
            <person name="Chain P."/>
            <person name="Malfatti S."/>
            <person name="Shin M."/>
            <person name="Vergez L."/>
            <person name="Schmutz J."/>
            <person name="Larimer F."/>
            <person name="Land M."/>
            <person name="Hauser L."/>
            <person name="Kyrpides N."/>
            <person name="Lykidis A."/>
            <person name="Tiedje J."/>
            <person name="Richardson P."/>
        </authorList>
    </citation>
    <scope>NUCLEOTIDE SEQUENCE [LARGE SCALE GENOMIC DNA]</scope>
    <source>
        <strain>W3-18-1</strain>
    </source>
</reference>
<sequence length="161" mass="17452">MAEVANNEQQAPQFNIQRVYTKDVSFETPNSPAVFQKEWNPEVKLDLDTRSAKLADDVYEVVLSLTVTAQNGGETAFLCEVQQAGIFSISGLTEPQLAHSLGAYCPNILFPYAREAVGSLVGRGTFPQLNLAPVNFDALFAQYVQQRQAAATAPAAEEANA</sequence>
<protein>
    <recommendedName>
        <fullName evidence="1">Protein-export protein SecB</fullName>
    </recommendedName>
</protein>
<gene>
    <name evidence="1" type="primary">secB</name>
    <name type="ordered locus">Sputw3181_4036</name>
</gene>
<keyword id="KW-0143">Chaperone</keyword>
<keyword id="KW-0963">Cytoplasm</keyword>
<keyword id="KW-0653">Protein transport</keyword>
<keyword id="KW-0811">Translocation</keyword>
<keyword id="KW-0813">Transport</keyword>
<proteinExistence type="inferred from homology"/>
<accession>A1RQ93</accession>